<feature type="chain" id="PRO_0000215158" description="Signal peptidase complex subunit 1">
    <location>
        <begin position="1"/>
        <end position="105"/>
    </location>
</feature>
<feature type="topological domain" description="Cytoplasmic" evidence="2">
    <location>
        <begin position="1"/>
        <end position="32"/>
    </location>
</feature>
<feature type="transmembrane region" description="Helical" evidence="4">
    <location>
        <begin position="33"/>
        <end position="53"/>
    </location>
</feature>
<feature type="topological domain" description="Lumenal" evidence="2">
    <location>
        <begin position="54"/>
        <end position="56"/>
    </location>
</feature>
<feature type="transmembrane region" description="Helical" evidence="4">
    <location>
        <begin position="57"/>
        <end position="77"/>
    </location>
</feature>
<feature type="topological domain" description="Cytoplasmic" evidence="2">
    <location>
        <begin position="78"/>
        <end position="105"/>
    </location>
</feature>
<reference key="1">
    <citation type="journal article" date="1998" name="Science">
        <title>Genome sequence of the nematode C. elegans: a platform for investigating biology.</title>
        <authorList>
            <consortium name="The C. elegans sequencing consortium"/>
        </authorList>
    </citation>
    <scope>NUCLEOTIDE SEQUENCE [LARGE SCALE GENOMIC DNA]</scope>
    <source>
        <strain>Bristol N2</strain>
    </source>
</reference>
<proteinExistence type="inferred from homology"/>
<dbReference type="EMBL" id="BX284601">
    <property type="protein sequence ID" value="CCD62128.1"/>
    <property type="molecule type" value="Genomic_DNA"/>
</dbReference>
<dbReference type="PIR" id="T32884">
    <property type="entry name" value="T32884"/>
</dbReference>
<dbReference type="RefSeq" id="NP_492797.1">
    <property type="nucleotide sequence ID" value="NM_060396.6"/>
</dbReference>
<dbReference type="SMR" id="O44953"/>
<dbReference type="FunCoup" id="O44953">
    <property type="interactions" value="1929"/>
</dbReference>
<dbReference type="STRING" id="6239.C34B2.10.1"/>
<dbReference type="PaxDb" id="6239-C34B2.10"/>
<dbReference type="PeptideAtlas" id="O44953"/>
<dbReference type="EnsemblMetazoa" id="C34B2.10.1">
    <property type="protein sequence ID" value="C34B2.10.1"/>
    <property type="gene ID" value="WBGene00016395"/>
</dbReference>
<dbReference type="GeneID" id="172967"/>
<dbReference type="KEGG" id="cel:CELE_C34B2.10"/>
<dbReference type="UCSC" id="C34B2.10.1">
    <property type="organism name" value="c. elegans"/>
</dbReference>
<dbReference type="AGR" id="WB:WBGene00016395"/>
<dbReference type="CTD" id="172967"/>
<dbReference type="WormBase" id="C34B2.10">
    <property type="protein sequence ID" value="CE16898"/>
    <property type="gene ID" value="WBGene00016395"/>
    <property type="gene designation" value="spcs-1"/>
</dbReference>
<dbReference type="eggNOG" id="KOG4112">
    <property type="taxonomic scope" value="Eukaryota"/>
</dbReference>
<dbReference type="GeneTree" id="ENSGT00390000018321"/>
<dbReference type="HOGENOM" id="CLU_134505_1_1_1"/>
<dbReference type="InParanoid" id="O44953"/>
<dbReference type="OMA" id="IHLTLWT"/>
<dbReference type="OrthoDB" id="263893at2759"/>
<dbReference type="PhylomeDB" id="O44953"/>
<dbReference type="PRO" id="PR:O44953"/>
<dbReference type="Proteomes" id="UP000001940">
    <property type="component" value="Chromosome I"/>
</dbReference>
<dbReference type="Bgee" id="WBGene00016395">
    <property type="expression patterns" value="Expressed in pharyngeal muscle cell (C elegans) and 4 other cell types or tissues"/>
</dbReference>
<dbReference type="GO" id="GO:0005783">
    <property type="term" value="C:endoplasmic reticulum"/>
    <property type="evidence" value="ECO:0000314"/>
    <property type="project" value="WormBase"/>
</dbReference>
<dbReference type="GO" id="GO:0005787">
    <property type="term" value="C:signal peptidase complex"/>
    <property type="evidence" value="ECO:0000318"/>
    <property type="project" value="GO_Central"/>
</dbReference>
<dbReference type="GO" id="GO:0036498">
    <property type="term" value="P:IRE1-mediated unfolded protein response"/>
    <property type="evidence" value="ECO:0007007"/>
    <property type="project" value="WormBase"/>
</dbReference>
<dbReference type="GO" id="GO:0045047">
    <property type="term" value="P:protein targeting to ER"/>
    <property type="evidence" value="ECO:0000318"/>
    <property type="project" value="GO_Central"/>
</dbReference>
<dbReference type="GO" id="GO:0006465">
    <property type="term" value="P:signal peptide processing"/>
    <property type="evidence" value="ECO:0000318"/>
    <property type="project" value="GO_Central"/>
</dbReference>
<dbReference type="InterPro" id="IPR009542">
    <property type="entry name" value="Spc1/SPCS1"/>
</dbReference>
<dbReference type="PANTHER" id="PTHR13202">
    <property type="entry name" value="MICROSOMAL SIGNAL PEPTIDASE 12 KDA SUBUNIT"/>
    <property type="match status" value="1"/>
</dbReference>
<dbReference type="PANTHER" id="PTHR13202:SF0">
    <property type="entry name" value="SIGNAL PEPTIDASE COMPLEX SUBUNIT 1"/>
    <property type="match status" value="1"/>
</dbReference>
<dbReference type="Pfam" id="PF06645">
    <property type="entry name" value="SPC12"/>
    <property type="match status" value="1"/>
</dbReference>
<organism>
    <name type="scientific">Caenorhabditis elegans</name>
    <dbReference type="NCBI Taxonomy" id="6239"/>
    <lineage>
        <taxon>Eukaryota</taxon>
        <taxon>Metazoa</taxon>
        <taxon>Ecdysozoa</taxon>
        <taxon>Nematoda</taxon>
        <taxon>Chromadorea</taxon>
        <taxon>Rhabditida</taxon>
        <taxon>Rhabditina</taxon>
        <taxon>Rhabditomorpha</taxon>
        <taxon>Rhabditoidea</taxon>
        <taxon>Rhabditidae</taxon>
        <taxon>Peloderinae</taxon>
        <taxon>Caenorhabditis</taxon>
    </lineage>
</organism>
<comment type="function">
    <text evidence="1 3">Component of the signal peptidase complex (SPC) which catalyzes the cleavage of N-terminal signal sequences from nascent proteins as they are translocated into the lumen of the endoplasmic reticulum (By similarity). Dispensable for SPC enzymatic activity (By similarity).</text>
</comment>
<comment type="subunit">
    <text evidence="3">Component of the signal peptidase complex (SPC) composed of a catalytic subunit sec-11 and three accessory subunits spcs-1, spcs-2 and spcs-3. The complex induces a local thinning of the ER membrane which is used to measure the length of the signal peptide (SP) h-region of protein substrates. This ensures the selectivity of the complex towards h-regions shorter than 18-20 amino acids.</text>
</comment>
<comment type="subcellular location">
    <subcellularLocation>
        <location evidence="2">Endoplasmic reticulum membrane</location>
        <topology evidence="2">Multi-pass membrane protein</topology>
    </subcellularLocation>
</comment>
<comment type="similarity">
    <text evidence="5">Belongs to the SPCS1 family.</text>
</comment>
<sequence>MDGMIAMLPAPLQKLSSHIDFQGQKVAERTYQVILTIAGIIGFLVGFWTQQLSYAMFTVLGASAFTALIILPPWPFLFRKNPIVWHTPAEPQESGDKKKETKKTK</sequence>
<keyword id="KW-0256">Endoplasmic reticulum</keyword>
<keyword id="KW-0472">Membrane</keyword>
<keyword id="KW-1185">Reference proteome</keyword>
<keyword id="KW-0812">Transmembrane</keyword>
<keyword id="KW-1133">Transmembrane helix</keyword>
<name>SPCS1_CAEEL</name>
<evidence type="ECO:0000250" key="1">
    <source>
        <dbReference type="UniProtKB" id="P46965"/>
    </source>
</evidence>
<evidence type="ECO:0000250" key="2">
    <source>
        <dbReference type="UniProtKB" id="P83362"/>
    </source>
</evidence>
<evidence type="ECO:0000250" key="3">
    <source>
        <dbReference type="UniProtKB" id="Q9Y6A9"/>
    </source>
</evidence>
<evidence type="ECO:0000255" key="4"/>
<evidence type="ECO:0000305" key="5"/>
<evidence type="ECO:0000312" key="6">
    <source>
        <dbReference type="WormBase" id="C34B2.10"/>
    </source>
</evidence>
<gene>
    <name evidence="6" type="primary">spcs-1</name>
    <name evidence="6" type="ORF">C34B2.10</name>
</gene>
<protein>
    <recommendedName>
        <fullName>Signal peptidase complex subunit 1</fullName>
    </recommendedName>
    <alternativeName>
        <fullName>Microsomal signal peptidase 12 kDa subunit</fullName>
        <shortName>SPase 12 kDa subunit</shortName>
    </alternativeName>
</protein>
<accession>O44953</accession>